<feature type="signal peptide" evidence="1">
    <location>
        <begin position="1"/>
        <end position="25"/>
    </location>
</feature>
<feature type="chain" id="PRO_0000446791" description="U-scoloptoxin(15)-Sm1a" evidence="3">
    <location>
        <begin position="26"/>
        <end position="79"/>
    </location>
</feature>
<reference key="1">
    <citation type="journal article" date="2014" name="Mol. Biol. Evol.">
        <title>Clawing through evolution: toxin diversification and convergence in the ancient lineage Chilopoda (centipedes).</title>
        <authorList>
            <person name="Undheim E.A."/>
            <person name="Jones A."/>
            <person name="Clauser K.R."/>
            <person name="Holland J.W."/>
            <person name="Pineda S.S."/>
            <person name="King G.F."/>
            <person name="Fry B.G."/>
        </authorList>
    </citation>
    <scope>NUCLEOTIDE SEQUENCE [MRNA]</scope>
    <scope>NOMENCLATURE</scope>
    <source>
        <tissue>Venom gland</tissue>
    </source>
</reference>
<protein>
    <recommendedName>
        <fullName evidence="2">U-scoloptoxin(15)-Sm1a</fullName>
        <shortName evidence="2">U-SLPTX(15)-Sm1a</shortName>
    </recommendedName>
</protein>
<sequence>MKMNVVVLSVVVLLLFIANIQQTEAGKPEKEVNFPAPGKKPTREDCKKACANKYTNGVMSKVIVAKLTGKNCYCKYQEN</sequence>
<organism>
    <name type="scientific">Scolopendra morsitans</name>
    <name type="common">Tanzanian blue ringleg centipede</name>
    <dbReference type="NCBI Taxonomy" id="943129"/>
    <lineage>
        <taxon>Eukaryota</taxon>
        <taxon>Metazoa</taxon>
        <taxon>Ecdysozoa</taxon>
        <taxon>Arthropoda</taxon>
        <taxon>Myriapoda</taxon>
        <taxon>Chilopoda</taxon>
        <taxon>Pleurostigmophora</taxon>
        <taxon>Scolopendromorpha</taxon>
        <taxon>Scolopendridae</taxon>
        <taxon>Scolopendra</taxon>
    </lineage>
</organism>
<dbReference type="SMR" id="P0DQB6"/>
<dbReference type="GO" id="GO:0005576">
    <property type="term" value="C:extracellular region"/>
    <property type="evidence" value="ECO:0007669"/>
    <property type="project" value="UniProtKB-SubCell"/>
</dbReference>
<dbReference type="GO" id="GO:0090729">
    <property type="term" value="F:toxin activity"/>
    <property type="evidence" value="ECO:0007669"/>
    <property type="project" value="UniProtKB-KW"/>
</dbReference>
<keyword id="KW-1015">Disulfide bond</keyword>
<keyword id="KW-0964">Secreted</keyword>
<keyword id="KW-0732">Signal</keyword>
<keyword id="KW-0800">Toxin</keyword>
<name>TXF1A_SCOMO</name>
<comment type="subcellular location">
    <subcellularLocation>
        <location evidence="4">Secreted</location>
    </subcellularLocation>
</comment>
<comment type="tissue specificity">
    <text evidence="4">Expressed by the venom gland.</text>
</comment>
<comment type="PTM">
    <text evidence="3">Contains 2 disulfide bonds.</text>
</comment>
<comment type="similarity">
    <text evidence="3">Belongs to the scoloptoxin-15 family.</text>
</comment>
<comment type="caution">
    <text evidence="4">All S.morsitans family members described in 'Undeheim et al., 2014' have not been imported into UniProtKB. Please, refer to this paper to access them.</text>
</comment>
<comment type="online information" name="National Center for Biotechnology Information (NCBI)">
    <link uri="https://www.ncbi.nlm.nih.gov/nuccore/GASH01000148"/>
</comment>
<evidence type="ECO:0000255" key="1"/>
<evidence type="ECO:0000303" key="2">
    <source>
    </source>
</evidence>
<evidence type="ECO:0000305" key="3"/>
<evidence type="ECO:0000305" key="4">
    <source>
    </source>
</evidence>
<proteinExistence type="inferred from homology"/>
<accession>P0DQB6</accession>